<reference key="1">
    <citation type="journal article" date="2003" name="Genome Res.">
        <title>Comparative genome analysis of Vibrio vulnificus, a marine pathogen.</title>
        <authorList>
            <person name="Chen C.-Y."/>
            <person name="Wu K.-M."/>
            <person name="Chang Y.-C."/>
            <person name="Chang C.-H."/>
            <person name="Tsai H.-C."/>
            <person name="Liao T.-L."/>
            <person name="Liu Y.-M."/>
            <person name="Chen H.-J."/>
            <person name="Shen A.B.-T."/>
            <person name="Li J.-C."/>
            <person name="Su T.-L."/>
            <person name="Shao C.-P."/>
            <person name="Lee C.-T."/>
            <person name="Hor L.-I."/>
            <person name="Tsai S.-F."/>
        </authorList>
    </citation>
    <scope>NUCLEOTIDE SEQUENCE [LARGE SCALE GENOMIC DNA]</scope>
    <source>
        <strain>YJ016</strain>
    </source>
</reference>
<accession>Q7MM12</accession>
<name>URK_VIBVY</name>
<proteinExistence type="inferred from homology"/>
<organism>
    <name type="scientific">Vibrio vulnificus (strain YJ016)</name>
    <dbReference type="NCBI Taxonomy" id="196600"/>
    <lineage>
        <taxon>Bacteria</taxon>
        <taxon>Pseudomonadati</taxon>
        <taxon>Pseudomonadota</taxon>
        <taxon>Gammaproteobacteria</taxon>
        <taxon>Vibrionales</taxon>
        <taxon>Vibrionaceae</taxon>
        <taxon>Vibrio</taxon>
    </lineage>
</organism>
<gene>
    <name evidence="1" type="primary">udk</name>
    <name type="ordered locus">VV1261</name>
</gene>
<feature type="chain" id="PRO_0000164509" description="Uridine kinase">
    <location>
        <begin position="1"/>
        <end position="213"/>
    </location>
</feature>
<feature type="binding site" evidence="1">
    <location>
        <begin position="14"/>
        <end position="21"/>
    </location>
    <ligand>
        <name>ATP</name>
        <dbReference type="ChEBI" id="CHEBI:30616"/>
    </ligand>
</feature>
<comment type="catalytic activity">
    <reaction evidence="1">
        <text>uridine + ATP = UMP + ADP + H(+)</text>
        <dbReference type="Rhea" id="RHEA:16825"/>
        <dbReference type="ChEBI" id="CHEBI:15378"/>
        <dbReference type="ChEBI" id="CHEBI:16704"/>
        <dbReference type="ChEBI" id="CHEBI:30616"/>
        <dbReference type="ChEBI" id="CHEBI:57865"/>
        <dbReference type="ChEBI" id="CHEBI:456216"/>
        <dbReference type="EC" id="2.7.1.48"/>
    </reaction>
</comment>
<comment type="catalytic activity">
    <reaction evidence="1">
        <text>cytidine + ATP = CMP + ADP + H(+)</text>
        <dbReference type="Rhea" id="RHEA:24674"/>
        <dbReference type="ChEBI" id="CHEBI:15378"/>
        <dbReference type="ChEBI" id="CHEBI:17562"/>
        <dbReference type="ChEBI" id="CHEBI:30616"/>
        <dbReference type="ChEBI" id="CHEBI:60377"/>
        <dbReference type="ChEBI" id="CHEBI:456216"/>
        <dbReference type="EC" id="2.7.1.48"/>
    </reaction>
</comment>
<comment type="pathway">
    <text evidence="1">Pyrimidine metabolism; CTP biosynthesis via salvage pathway; CTP from cytidine: step 1/3.</text>
</comment>
<comment type="pathway">
    <text evidence="1">Pyrimidine metabolism; UMP biosynthesis via salvage pathway; UMP from uridine: step 1/1.</text>
</comment>
<comment type="subcellular location">
    <subcellularLocation>
        <location evidence="1">Cytoplasm</location>
    </subcellularLocation>
</comment>
<comment type="similarity">
    <text evidence="1">Belongs to the uridine kinase family.</text>
</comment>
<comment type="sequence caution" evidence="2">
    <conflict type="erroneous initiation">
        <sequence resource="EMBL-CDS" id="BAC94025"/>
    </conflict>
</comment>
<sequence length="213" mass="24245">MSEKSQCVIVGIAGASASGKSLIASTIYNELRAKVGDHQIGVITEDCYYNDQSHLSMEERVKTNYDHPNALDHDLLCEHLEKLMKGESVEVPEYSYTEHTRTENTTTMTPKKVIILEGILLLTDPRLRDLMHATVFMDTPLDICLLRRVKRDVEERGRTMESVLKQYQKTVRPMFMQFIEPSKQYADIIVPRGGKNRIAIDVLKAHIAKLLKA</sequence>
<dbReference type="EC" id="2.7.1.48" evidence="1"/>
<dbReference type="EMBL" id="BA000037">
    <property type="protein sequence ID" value="BAC94025.1"/>
    <property type="status" value="ALT_INIT"/>
    <property type="molecule type" value="Genomic_DNA"/>
</dbReference>
<dbReference type="RefSeq" id="WP_011080832.1">
    <property type="nucleotide sequence ID" value="NC_005139.1"/>
</dbReference>
<dbReference type="SMR" id="Q7MM12"/>
<dbReference type="STRING" id="672.VV93_v1c11790"/>
<dbReference type="GeneID" id="93894232"/>
<dbReference type="KEGG" id="vvy:VV1261"/>
<dbReference type="eggNOG" id="COG0572">
    <property type="taxonomic scope" value="Bacteria"/>
</dbReference>
<dbReference type="HOGENOM" id="CLU_021278_1_2_6"/>
<dbReference type="UniPathway" id="UPA00574">
    <property type="reaction ID" value="UER00637"/>
</dbReference>
<dbReference type="UniPathway" id="UPA00579">
    <property type="reaction ID" value="UER00640"/>
</dbReference>
<dbReference type="Proteomes" id="UP000002675">
    <property type="component" value="Chromosome I"/>
</dbReference>
<dbReference type="GO" id="GO:0005737">
    <property type="term" value="C:cytoplasm"/>
    <property type="evidence" value="ECO:0007669"/>
    <property type="project" value="UniProtKB-SubCell"/>
</dbReference>
<dbReference type="GO" id="GO:0005524">
    <property type="term" value="F:ATP binding"/>
    <property type="evidence" value="ECO:0007669"/>
    <property type="project" value="UniProtKB-UniRule"/>
</dbReference>
<dbReference type="GO" id="GO:0043771">
    <property type="term" value="F:cytidine kinase activity"/>
    <property type="evidence" value="ECO:0007669"/>
    <property type="project" value="RHEA"/>
</dbReference>
<dbReference type="GO" id="GO:0004849">
    <property type="term" value="F:uridine kinase activity"/>
    <property type="evidence" value="ECO:0007669"/>
    <property type="project" value="UniProtKB-UniRule"/>
</dbReference>
<dbReference type="GO" id="GO:0044211">
    <property type="term" value="P:CTP salvage"/>
    <property type="evidence" value="ECO:0007669"/>
    <property type="project" value="UniProtKB-UniRule"/>
</dbReference>
<dbReference type="GO" id="GO:0044206">
    <property type="term" value="P:UMP salvage"/>
    <property type="evidence" value="ECO:0007669"/>
    <property type="project" value="UniProtKB-UniRule"/>
</dbReference>
<dbReference type="CDD" id="cd02023">
    <property type="entry name" value="UMPK"/>
    <property type="match status" value="1"/>
</dbReference>
<dbReference type="FunFam" id="3.40.50.300:FF:000252">
    <property type="entry name" value="Uridine kinase"/>
    <property type="match status" value="1"/>
</dbReference>
<dbReference type="Gene3D" id="3.40.50.300">
    <property type="entry name" value="P-loop containing nucleotide triphosphate hydrolases"/>
    <property type="match status" value="1"/>
</dbReference>
<dbReference type="HAMAP" id="MF_00551">
    <property type="entry name" value="Uridine_kinase"/>
    <property type="match status" value="1"/>
</dbReference>
<dbReference type="InterPro" id="IPR027417">
    <property type="entry name" value="P-loop_NTPase"/>
</dbReference>
<dbReference type="InterPro" id="IPR006083">
    <property type="entry name" value="PRK/URK"/>
</dbReference>
<dbReference type="InterPro" id="IPR026008">
    <property type="entry name" value="Uridine_kinase"/>
</dbReference>
<dbReference type="InterPro" id="IPR000764">
    <property type="entry name" value="Uridine_kinase-like"/>
</dbReference>
<dbReference type="NCBIfam" id="NF004018">
    <property type="entry name" value="PRK05480.1"/>
    <property type="match status" value="1"/>
</dbReference>
<dbReference type="NCBIfam" id="TIGR00235">
    <property type="entry name" value="udk"/>
    <property type="match status" value="1"/>
</dbReference>
<dbReference type="PANTHER" id="PTHR10285">
    <property type="entry name" value="URIDINE KINASE"/>
    <property type="match status" value="1"/>
</dbReference>
<dbReference type="Pfam" id="PF00485">
    <property type="entry name" value="PRK"/>
    <property type="match status" value="1"/>
</dbReference>
<dbReference type="PRINTS" id="PR00988">
    <property type="entry name" value="URIDINKINASE"/>
</dbReference>
<dbReference type="SUPFAM" id="SSF52540">
    <property type="entry name" value="P-loop containing nucleoside triphosphate hydrolases"/>
    <property type="match status" value="1"/>
</dbReference>
<keyword id="KW-0067">ATP-binding</keyword>
<keyword id="KW-0963">Cytoplasm</keyword>
<keyword id="KW-0418">Kinase</keyword>
<keyword id="KW-0547">Nucleotide-binding</keyword>
<keyword id="KW-0808">Transferase</keyword>
<evidence type="ECO:0000255" key="1">
    <source>
        <dbReference type="HAMAP-Rule" id="MF_00551"/>
    </source>
</evidence>
<evidence type="ECO:0000305" key="2"/>
<protein>
    <recommendedName>
        <fullName evidence="1">Uridine kinase</fullName>
        <ecNumber evidence="1">2.7.1.48</ecNumber>
    </recommendedName>
    <alternativeName>
        <fullName evidence="1">Cytidine monophosphokinase</fullName>
    </alternativeName>
    <alternativeName>
        <fullName evidence="1">Uridine monophosphokinase</fullName>
    </alternativeName>
</protein>